<feature type="signal peptide" evidence="6">
    <location>
        <begin position="1"/>
        <end position="30"/>
    </location>
</feature>
<feature type="chain" id="PRO_0000014695" description="Contactin-2">
    <location>
        <begin position="31"/>
        <end position="1012"/>
    </location>
</feature>
<feature type="propeptide" id="PRO_0000014696" description="Removed in mature form" evidence="2">
    <location>
        <begin position="1013"/>
        <end position="1040"/>
    </location>
</feature>
<feature type="domain" description="Ig-like C2-type 1">
    <location>
        <begin position="43"/>
        <end position="128"/>
    </location>
</feature>
<feature type="domain" description="Ig-like C2-type 2">
    <location>
        <begin position="133"/>
        <end position="222"/>
    </location>
</feature>
<feature type="domain" description="Ig-like C2-type 3">
    <location>
        <begin position="239"/>
        <end position="322"/>
    </location>
</feature>
<feature type="domain" description="Ig-like C2-type 4">
    <location>
        <begin position="327"/>
        <end position="411"/>
    </location>
</feature>
<feature type="domain" description="Ig-like C2-type 5">
    <location>
        <begin position="417"/>
        <end position="504"/>
    </location>
</feature>
<feature type="domain" description="Ig-like C2-type 6">
    <location>
        <begin position="509"/>
        <end position="603"/>
    </location>
</feature>
<feature type="domain" description="Fibronectin type-III 1" evidence="4">
    <location>
        <begin position="610"/>
        <end position="708"/>
    </location>
</feature>
<feature type="domain" description="Fibronectin type-III 2" evidence="4">
    <location>
        <begin position="713"/>
        <end position="810"/>
    </location>
</feature>
<feature type="domain" description="Fibronectin type-III 3" evidence="4">
    <location>
        <begin position="815"/>
        <end position="910"/>
    </location>
</feature>
<feature type="domain" description="Fibronectin type-III 4" evidence="4">
    <location>
        <begin position="915"/>
        <end position="1006"/>
    </location>
</feature>
<feature type="region of interest" description="Disordered" evidence="5">
    <location>
        <begin position="694"/>
        <end position="720"/>
    </location>
</feature>
<feature type="region of interest" description="Disordered" evidence="5">
    <location>
        <begin position="894"/>
        <end position="919"/>
    </location>
</feature>
<feature type="short sequence motif" description="Cell attachment site" evidence="1">
    <location>
        <begin position="794"/>
        <end position="796"/>
    </location>
</feature>
<feature type="lipid moiety-binding region" description="GPI-anchor amidated asparagine" evidence="2">
    <location>
        <position position="1012"/>
    </location>
</feature>
<feature type="glycosylation site" description="N-linked (GlcNAc...) asparagine" evidence="2">
    <location>
        <position position="76"/>
    </location>
</feature>
<feature type="glycosylation site" description="N-linked (GlcNAc...) asparagine" evidence="2">
    <location>
        <position position="198"/>
    </location>
</feature>
<feature type="glycosylation site" description="N-linked (GlcNAc...) asparagine" evidence="2">
    <location>
        <position position="204"/>
    </location>
</feature>
<feature type="glycosylation site" description="N-linked (GlcNAc...) asparagine" evidence="2">
    <location>
        <position position="461"/>
    </location>
</feature>
<feature type="glycosylation site" description="N-linked (GlcNAc...) asparagine" evidence="2">
    <location>
        <position position="477"/>
    </location>
</feature>
<feature type="glycosylation site" description="N-linked (GlcNAc...) asparagine" evidence="2">
    <location>
        <position position="498"/>
    </location>
</feature>
<feature type="glycosylation site" description="N-linked (GlcNAc...) asparagine" evidence="2">
    <location>
        <position position="525"/>
    </location>
</feature>
<feature type="glycosylation site" description="N-linked (GlcNAc...) asparagine" evidence="2">
    <location>
        <position position="830"/>
    </location>
</feature>
<feature type="glycosylation site" description="N-linked (GlcNAc...) asparagine" evidence="7">
    <location>
        <position position="904"/>
    </location>
</feature>
<feature type="glycosylation site" description="N-linked (GlcNAc...) asparagine" evidence="2">
    <location>
        <position position="918"/>
    </location>
</feature>
<feature type="glycosylation site" description="N-linked (GlcNAc...) asparagine" evidence="2">
    <location>
        <position position="940"/>
    </location>
</feature>
<feature type="disulfide bond" evidence="3 8">
    <location>
        <begin position="61"/>
        <end position="111"/>
    </location>
</feature>
<feature type="disulfide bond" evidence="3 8">
    <location>
        <begin position="155"/>
        <end position="207"/>
    </location>
</feature>
<feature type="disulfide bond" evidence="3 8">
    <location>
        <begin position="261"/>
        <end position="306"/>
    </location>
</feature>
<feature type="disulfide bond" evidence="3 8">
    <location>
        <begin position="348"/>
        <end position="395"/>
    </location>
</feature>
<feature type="sequence variant" id="VAR_021918" description="In dbSNP:rs2275697.">
    <original>A</original>
    <variation>T</variation>
    <location>
        <position position="145"/>
    </location>
</feature>
<feature type="sequence variant" id="VAR_029129" description="In dbSNP:rs2229866.">
    <original>P</original>
    <variation>L</variation>
    <location>
        <position position="366"/>
    </location>
</feature>
<feature type="sequence variant" id="VAR_021919" description="In dbSNP:rs2305276.">
    <original>R</original>
    <variation>W</variation>
    <location>
        <position position="657"/>
    </location>
</feature>
<feature type="sequence variant" id="VAR_049867" description="In dbSNP:rs17416074.">
    <original>V</original>
    <variation>I</variation>
    <location>
        <position position="1024"/>
    </location>
</feature>
<feature type="strand" evidence="11">
    <location>
        <begin position="35"/>
        <end position="41"/>
    </location>
</feature>
<feature type="strand" evidence="11">
    <location>
        <begin position="46"/>
        <end position="51"/>
    </location>
</feature>
<feature type="strand" evidence="11">
    <location>
        <begin position="55"/>
        <end position="59"/>
    </location>
</feature>
<feature type="strand" evidence="11">
    <location>
        <begin position="62"/>
        <end position="67"/>
    </location>
</feature>
<feature type="strand" evidence="11">
    <location>
        <begin position="70"/>
        <end position="75"/>
    </location>
</feature>
<feature type="strand" evidence="11">
    <location>
        <begin position="87"/>
        <end position="91"/>
    </location>
</feature>
<feature type="strand" evidence="11">
    <location>
        <begin position="94"/>
        <end position="99"/>
    </location>
</feature>
<feature type="helix" evidence="11">
    <location>
        <begin position="102"/>
        <end position="105"/>
    </location>
</feature>
<feature type="strand" evidence="11">
    <location>
        <begin position="107"/>
        <end position="115"/>
    </location>
</feature>
<feature type="strand" evidence="11">
    <location>
        <begin position="118"/>
        <end position="121"/>
    </location>
</feature>
<feature type="strand" evidence="11">
    <location>
        <begin position="125"/>
        <end position="132"/>
    </location>
</feature>
<feature type="strand" evidence="12">
    <location>
        <begin position="144"/>
        <end position="146"/>
    </location>
</feature>
<feature type="strand" evidence="11">
    <location>
        <begin position="151"/>
        <end position="153"/>
    </location>
</feature>
<feature type="strand" evidence="11">
    <location>
        <begin position="160"/>
        <end position="162"/>
    </location>
</feature>
<feature type="strand" evidence="11">
    <location>
        <begin position="165"/>
        <end position="172"/>
    </location>
</feature>
<feature type="strand" evidence="11">
    <location>
        <begin position="180"/>
        <end position="185"/>
    </location>
</feature>
<feature type="strand" evidence="11">
    <location>
        <begin position="187"/>
        <end position="189"/>
    </location>
</feature>
<feature type="strand" evidence="11">
    <location>
        <begin position="192"/>
        <end position="196"/>
    </location>
</feature>
<feature type="helix" evidence="12">
    <location>
        <begin position="199"/>
        <end position="201"/>
    </location>
</feature>
<feature type="strand" evidence="11">
    <location>
        <begin position="203"/>
        <end position="213"/>
    </location>
</feature>
<feature type="strand" evidence="11">
    <location>
        <begin position="216"/>
        <end position="221"/>
    </location>
</feature>
<feature type="strand" evidence="11">
    <location>
        <begin position="225"/>
        <end position="227"/>
    </location>
</feature>
<feature type="strand" evidence="11">
    <location>
        <begin position="229"/>
        <end position="231"/>
    </location>
</feature>
<feature type="strand" evidence="11">
    <location>
        <begin position="237"/>
        <end position="243"/>
    </location>
</feature>
<feature type="strand" evidence="11">
    <location>
        <begin position="247"/>
        <end position="252"/>
    </location>
</feature>
<feature type="strand" evidence="11">
    <location>
        <begin position="257"/>
        <end position="260"/>
    </location>
</feature>
<feature type="strand" evidence="11">
    <location>
        <begin position="262"/>
        <end position="267"/>
    </location>
</feature>
<feature type="strand" evidence="11">
    <location>
        <begin position="270"/>
        <end position="275"/>
    </location>
</feature>
<feature type="turn" evidence="12">
    <location>
        <begin position="282"/>
        <end position="284"/>
    </location>
</feature>
<feature type="strand" evidence="11">
    <location>
        <begin position="289"/>
        <end position="295"/>
    </location>
</feature>
<feature type="helix" evidence="11">
    <location>
        <begin position="298"/>
        <end position="300"/>
    </location>
</feature>
<feature type="strand" evidence="11">
    <location>
        <begin position="302"/>
        <end position="310"/>
    </location>
</feature>
<feature type="strand" evidence="11">
    <location>
        <begin position="313"/>
        <end position="324"/>
    </location>
</feature>
<feature type="strand" evidence="11">
    <location>
        <begin position="329"/>
        <end position="331"/>
    </location>
</feature>
<feature type="strand" evidence="11">
    <location>
        <begin position="336"/>
        <end position="339"/>
    </location>
</feature>
<feature type="strand" evidence="11">
    <location>
        <begin position="344"/>
        <end position="347"/>
    </location>
</feature>
<feature type="strand" evidence="12">
    <location>
        <begin position="349"/>
        <end position="351"/>
    </location>
</feature>
<feature type="strand" evidence="11">
    <location>
        <begin position="352"/>
        <end position="354"/>
    </location>
</feature>
<feature type="strand" evidence="11">
    <location>
        <begin position="357"/>
        <end position="366"/>
    </location>
</feature>
<feature type="strand" evidence="11">
    <location>
        <begin position="373"/>
        <end position="376"/>
    </location>
</feature>
<feature type="strand" evidence="11">
    <location>
        <begin position="379"/>
        <end position="384"/>
    </location>
</feature>
<feature type="helix" evidence="11">
    <location>
        <begin position="387"/>
        <end position="389"/>
    </location>
</feature>
<feature type="strand" evidence="11">
    <location>
        <begin position="391"/>
        <end position="398"/>
    </location>
</feature>
<feature type="strand" evidence="11">
    <location>
        <begin position="403"/>
        <end position="413"/>
    </location>
</feature>
<feature type="strand" evidence="12">
    <location>
        <begin position="420"/>
        <end position="422"/>
    </location>
</feature>
<feature type="strand" evidence="12">
    <location>
        <begin position="426"/>
        <end position="431"/>
    </location>
</feature>
<feature type="strand" evidence="12">
    <location>
        <begin position="436"/>
        <end position="438"/>
    </location>
</feature>
<feature type="strand" evidence="12">
    <location>
        <begin position="449"/>
        <end position="454"/>
    </location>
</feature>
<feature type="strand" evidence="12">
    <location>
        <begin position="463"/>
        <end position="467"/>
    </location>
</feature>
<feature type="strand" evidence="12">
    <location>
        <begin position="473"/>
        <end position="475"/>
    </location>
</feature>
<feature type="strand" evidence="12">
    <location>
        <begin position="484"/>
        <end position="492"/>
    </location>
</feature>
<feature type="strand" evidence="12">
    <location>
        <begin position="495"/>
        <end position="506"/>
    </location>
</feature>
<feature type="strand" evidence="12">
    <location>
        <begin position="510"/>
        <end position="513"/>
    </location>
</feature>
<feature type="strand" evidence="12">
    <location>
        <begin position="518"/>
        <end position="521"/>
    </location>
</feature>
<feature type="strand" evidence="12">
    <location>
        <begin position="526"/>
        <end position="528"/>
    </location>
</feature>
<feature type="strand" evidence="12">
    <location>
        <begin position="531"/>
        <end position="533"/>
    </location>
</feature>
<feature type="strand" evidence="12">
    <location>
        <begin position="541"/>
        <end position="546"/>
    </location>
</feature>
<feature type="strand" evidence="12">
    <location>
        <begin position="553"/>
        <end position="555"/>
    </location>
</feature>
<feature type="strand" evidence="12">
    <location>
        <begin position="559"/>
        <end position="564"/>
    </location>
</feature>
<feature type="strand" evidence="12">
    <location>
        <begin position="567"/>
        <end position="569"/>
    </location>
</feature>
<feature type="strand" evidence="12">
    <location>
        <begin position="571"/>
        <end position="574"/>
    </location>
</feature>
<feature type="helix" evidence="12">
    <location>
        <begin position="579"/>
        <end position="581"/>
    </location>
</feature>
<feature type="strand" evidence="12">
    <location>
        <begin position="583"/>
        <end position="590"/>
    </location>
</feature>
<feature type="strand" evidence="12">
    <location>
        <begin position="595"/>
        <end position="605"/>
    </location>
</feature>
<comment type="function">
    <text evidence="9">In conjunction with another transmembrane protein, CNTNAP2, contributes to the organization of axonal domains at nodes of Ranvier by maintaining voltage-gated potassium channels at the juxtaparanodal region. May be involved in cell adhesion.</text>
</comment>
<comment type="interaction">
    <interactant intactId="EBI-4397248">
        <id>Q02246</id>
    </interactant>
    <interactant intactId="EBI-77613">
        <id>P05067</id>
        <label>APP</label>
    </interactant>
    <organismsDiffer>false</organismsDiffer>
    <experiments>3</experiments>
</comment>
<comment type="subcellular location">
    <subcellularLocation>
        <location>Cell membrane</location>
        <topology>Lipid-anchor</topology>
        <topology>GPI-anchor</topology>
    </subcellularLocation>
    <text>Attached to the neuronal membrane by a GPI-anchor and is also released from neurons.</text>
</comment>
<comment type="disease" evidence="9">
    <disease id="DI-03870">
        <name>Epilepsy, early-onset, 5, with or without developmental delay</name>
        <acronym>EPEO5</acronym>
        <description>An autosomal recessive neurologic disorder characterized by a combination of various seizure types with onset in the first decade of life or during adolescence. Most patients have developmental delay, impaired intellectual development, and behavioral abnormalities.</description>
        <dbReference type="MIM" id="615400"/>
    </disease>
    <text>The disease is caused by variants affecting the gene represented in this entry.</text>
</comment>
<comment type="similarity">
    <text evidence="10">Belongs to the immunoglobulin superfamily. Contactin family.</text>
</comment>
<evidence type="ECO:0000250" key="1"/>
<evidence type="ECO:0000255" key="2"/>
<evidence type="ECO:0000255" key="3">
    <source>
        <dbReference type="PROSITE-ProRule" id="PRU00114"/>
    </source>
</evidence>
<evidence type="ECO:0000255" key="4">
    <source>
        <dbReference type="PROSITE-ProRule" id="PRU00316"/>
    </source>
</evidence>
<evidence type="ECO:0000256" key="5">
    <source>
        <dbReference type="SAM" id="MobiDB-lite"/>
    </source>
</evidence>
<evidence type="ECO:0000269" key="6">
    <source>
    </source>
</evidence>
<evidence type="ECO:0000269" key="7">
    <source>
    </source>
</evidence>
<evidence type="ECO:0000269" key="8">
    <source>
    </source>
</evidence>
<evidence type="ECO:0000269" key="9">
    <source>
    </source>
</evidence>
<evidence type="ECO:0000305" key="10"/>
<evidence type="ECO:0007829" key="11">
    <source>
        <dbReference type="PDB" id="2OM5"/>
    </source>
</evidence>
<evidence type="ECO:0007829" key="12">
    <source>
        <dbReference type="PDB" id="8K3J"/>
    </source>
</evidence>
<keyword id="KW-0002">3D-structure</keyword>
<keyword id="KW-0130">Cell adhesion</keyword>
<keyword id="KW-1003">Cell membrane</keyword>
<keyword id="KW-0903">Direct protein sequencing</keyword>
<keyword id="KW-1015">Disulfide bond</keyword>
<keyword id="KW-0887">Epilepsy</keyword>
<keyword id="KW-0325">Glycoprotein</keyword>
<keyword id="KW-0336">GPI-anchor</keyword>
<keyword id="KW-0393">Immunoglobulin domain</keyword>
<keyword id="KW-0449">Lipoprotein</keyword>
<keyword id="KW-0472">Membrane</keyword>
<keyword id="KW-1267">Proteomics identification</keyword>
<keyword id="KW-1185">Reference proteome</keyword>
<keyword id="KW-0677">Repeat</keyword>
<keyword id="KW-0732">Signal</keyword>
<accession>Q02246</accession>
<accession>P78432</accession>
<accession>Q5T054</accession>
<protein>
    <recommendedName>
        <fullName>Contactin-2</fullName>
    </recommendedName>
    <alternativeName>
        <fullName>Axonal glycoprotein TAG-1</fullName>
    </alternativeName>
    <alternativeName>
        <fullName>Axonin-1</fullName>
    </alternativeName>
    <alternativeName>
        <fullName>Transient axonal glycoprotein 1</fullName>
        <shortName>TAX-1</shortName>
    </alternativeName>
</protein>
<gene>
    <name type="primary">CNTN2</name>
    <name type="synonym">AXT</name>
    <name type="synonym">TAG1</name>
    <name type="synonym">TAX1</name>
</gene>
<dbReference type="EMBL" id="X68274">
    <property type="protein sequence ID" value="CAA48335.1"/>
    <property type="molecule type" value="mRNA"/>
</dbReference>
<dbReference type="EMBL" id="X67734">
    <property type="protein sequence ID" value="CAA47963.1"/>
    <property type="molecule type" value="mRNA"/>
</dbReference>
<dbReference type="EMBL" id="X84420">
    <property type="protein sequence ID" value="CAA59137.1"/>
    <property type="molecule type" value="Genomic_DNA"/>
</dbReference>
<dbReference type="EMBL" id="AL583832">
    <property type="status" value="NOT_ANNOTATED_CDS"/>
    <property type="molecule type" value="Genomic_DNA"/>
</dbReference>
<dbReference type="EMBL" id="X92681">
    <property type="protein sequence ID" value="CAA63365.1"/>
    <property type="molecule type" value="Genomic_DNA"/>
</dbReference>
<dbReference type="CCDS" id="CCDS1449.1"/>
<dbReference type="PIR" id="S35508">
    <property type="entry name" value="A49356"/>
</dbReference>
<dbReference type="RefSeq" id="NP_001333012.1">
    <property type="nucleotide sequence ID" value="NM_001346083.2"/>
</dbReference>
<dbReference type="RefSeq" id="NP_005067.1">
    <property type="nucleotide sequence ID" value="NM_005076.5"/>
</dbReference>
<dbReference type="PDB" id="2OM5">
    <property type="method" value="X-ray"/>
    <property type="resolution" value="3.07 A"/>
    <property type="chains" value="A=34-414"/>
</dbReference>
<dbReference type="PDB" id="8K3J">
    <property type="method" value="EM"/>
    <property type="resolution" value="3.30 A"/>
    <property type="chains" value="A/B=31-1012"/>
</dbReference>
<dbReference type="PDB" id="8K53">
    <property type="method" value="EM"/>
    <property type="resolution" value="3.80 A"/>
    <property type="chains" value="A/B=31-1012"/>
</dbReference>
<dbReference type="PDB" id="9BA4">
    <property type="method" value="EM"/>
    <property type="resolution" value="3.54 A"/>
    <property type="chains" value="A/B=31-1004"/>
</dbReference>
<dbReference type="PDB" id="9BA5">
    <property type="method" value="EM"/>
    <property type="resolution" value="3.51 A"/>
    <property type="chains" value="A/B=31-606"/>
</dbReference>
<dbReference type="PDBsum" id="2OM5"/>
<dbReference type="PDBsum" id="8K3J"/>
<dbReference type="PDBsum" id="8K53"/>
<dbReference type="PDBsum" id="9BA4"/>
<dbReference type="PDBsum" id="9BA5"/>
<dbReference type="EMDB" id="EMD-36853"/>
<dbReference type="EMDB" id="EMD-36896"/>
<dbReference type="EMDB" id="EMD-44395"/>
<dbReference type="EMDB" id="EMD-44396"/>
<dbReference type="EMDB" id="EMD-44397"/>
<dbReference type="SMR" id="Q02246"/>
<dbReference type="BioGRID" id="112763">
    <property type="interactions" value="16"/>
</dbReference>
<dbReference type="FunCoup" id="Q02246">
    <property type="interactions" value="456"/>
</dbReference>
<dbReference type="IntAct" id="Q02246">
    <property type="interactions" value="5"/>
</dbReference>
<dbReference type="MINT" id="Q02246"/>
<dbReference type="STRING" id="9606.ENSP00000330633"/>
<dbReference type="TCDB" id="8.A.23.1.3">
    <property type="family name" value="the basigin (basigin) family"/>
</dbReference>
<dbReference type="GlyCosmos" id="Q02246">
    <property type="glycosylation" value="11 sites, No reported glycans"/>
</dbReference>
<dbReference type="GlyGen" id="Q02246">
    <property type="glycosylation" value="13 sites, 5 N-linked glycans (3 sites)"/>
</dbReference>
<dbReference type="iPTMnet" id="Q02246"/>
<dbReference type="PhosphoSitePlus" id="Q02246"/>
<dbReference type="BioMuta" id="CNTN2"/>
<dbReference type="DMDM" id="399092"/>
<dbReference type="MassIVE" id="Q02246"/>
<dbReference type="PaxDb" id="9606-ENSP00000330633"/>
<dbReference type="PeptideAtlas" id="Q02246"/>
<dbReference type="ProteomicsDB" id="58068"/>
<dbReference type="Antibodypedia" id="670">
    <property type="antibodies" value="273 antibodies from 32 providers"/>
</dbReference>
<dbReference type="DNASU" id="6900"/>
<dbReference type="Ensembl" id="ENST00000331830.7">
    <property type="protein sequence ID" value="ENSP00000330633.4"/>
    <property type="gene ID" value="ENSG00000184144.12"/>
</dbReference>
<dbReference type="Ensembl" id="ENST00000638378.1">
    <property type="protein sequence ID" value="ENSP00000492617.1"/>
    <property type="gene ID" value="ENSG00000184144.12"/>
</dbReference>
<dbReference type="Ensembl" id="ENST00000639302.1">
    <property type="protein sequence ID" value="ENSP00000491671.1"/>
    <property type="gene ID" value="ENSG00000184144.12"/>
</dbReference>
<dbReference type="Ensembl" id="ENST00000640326.1">
    <property type="protein sequence ID" value="ENSP00000492495.1"/>
    <property type="gene ID" value="ENSG00000184144.12"/>
</dbReference>
<dbReference type="GeneID" id="6900"/>
<dbReference type="KEGG" id="hsa:6900"/>
<dbReference type="MANE-Select" id="ENST00000331830.7">
    <property type="protein sequence ID" value="ENSP00000330633.4"/>
    <property type="RefSeq nucleotide sequence ID" value="NM_005076.5"/>
    <property type="RefSeq protein sequence ID" value="NP_005067.1"/>
</dbReference>
<dbReference type="UCSC" id="uc001hbr.4">
    <property type="organism name" value="human"/>
</dbReference>
<dbReference type="AGR" id="HGNC:2172"/>
<dbReference type="CTD" id="6900"/>
<dbReference type="DisGeNET" id="6900"/>
<dbReference type="GeneCards" id="CNTN2"/>
<dbReference type="HGNC" id="HGNC:2172">
    <property type="gene designation" value="CNTN2"/>
</dbReference>
<dbReference type="HPA" id="ENSG00000184144">
    <property type="expression patterns" value="Tissue enriched (brain)"/>
</dbReference>
<dbReference type="MalaCards" id="CNTN2"/>
<dbReference type="MIM" id="190197">
    <property type="type" value="gene"/>
</dbReference>
<dbReference type="MIM" id="615400">
    <property type="type" value="phenotype"/>
</dbReference>
<dbReference type="neXtProt" id="NX_Q02246"/>
<dbReference type="OpenTargets" id="ENSG00000184144"/>
<dbReference type="Orphanet" id="86814">
    <property type="disease" value="Familialadult myoclonic epilepsy"/>
</dbReference>
<dbReference type="PharmGKB" id="PA26686"/>
<dbReference type="VEuPathDB" id="HostDB:ENSG00000184144"/>
<dbReference type="eggNOG" id="KOG3513">
    <property type="taxonomic scope" value="Eukaryota"/>
</dbReference>
<dbReference type="GeneTree" id="ENSGT00940000159193"/>
<dbReference type="HOGENOM" id="CLU_005756_0_0_1"/>
<dbReference type="InParanoid" id="Q02246"/>
<dbReference type="OMA" id="NTHNYIF"/>
<dbReference type="OrthoDB" id="6418794at2759"/>
<dbReference type="PAN-GO" id="Q02246">
    <property type="GO annotations" value="6 GO annotations based on evolutionary models"/>
</dbReference>
<dbReference type="PhylomeDB" id="Q02246"/>
<dbReference type="TreeFam" id="TF351103"/>
<dbReference type="PathwayCommons" id="Q02246"/>
<dbReference type="Reactome" id="R-HSA-373760">
    <property type="pathway name" value="L1CAM interactions"/>
</dbReference>
<dbReference type="Reactome" id="R-HSA-419037">
    <property type="pathway name" value="NCAM1 interactions"/>
</dbReference>
<dbReference type="Reactome" id="R-HSA-447038">
    <property type="pathway name" value="NrCAM interactions"/>
</dbReference>
<dbReference type="SignaLink" id="Q02246"/>
<dbReference type="BioGRID-ORCS" id="6900">
    <property type="hits" value="14 hits in 1140 CRISPR screens"/>
</dbReference>
<dbReference type="CD-CODE" id="FB4E32DD">
    <property type="entry name" value="Presynaptic clusters and postsynaptic densities"/>
</dbReference>
<dbReference type="ChiTaRS" id="CNTN2">
    <property type="organism name" value="human"/>
</dbReference>
<dbReference type="EvolutionaryTrace" id="Q02246"/>
<dbReference type="GeneWiki" id="CNTN2"/>
<dbReference type="GenomeRNAi" id="6900"/>
<dbReference type="Pharos" id="Q02246">
    <property type="development level" value="Tbio"/>
</dbReference>
<dbReference type="PRO" id="PR:Q02246"/>
<dbReference type="Proteomes" id="UP000005640">
    <property type="component" value="Chromosome 1"/>
</dbReference>
<dbReference type="RNAct" id="Q02246">
    <property type="molecule type" value="protein"/>
</dbReference>
<dbReference type="Bgee" id="ENSG00000184144">
    <property type="expression patterns" value="Expressed in inferior vagus X ganglion and 148 other cell types or tissues"/>
</dbReference>
<dbReference type="ExpressionAtlas" id="Q02246">
    <property type="expression patterns" value="baseline and differential"/>
</dbReference>
<dbReference type="GO" id="GO:0030424">
    <property type="term" value="C:axon"/>
    <property type="evidence" value="ECO:0000318"/>
    <property type="project" value="GO_Central"/>
</dbReference>
<dbReference type="GO" id="GO:0043194">
    <property type="term" value="C:axon initial segment"/>
    <property type="evidence" value="ECO:0007669"/>
    <property type="project" value="Ensembl"/>
</dbReference>
<dbReference type="GO" id="GO:0009986">
    <property type="term" value="C:cell surface"/>
    <property type="evidence" value="ECO:0007669"/>
    <property type="project" value="Ensembl"/>
</dbReference>
<dbReference type="GO" id="GO:0044224">
    <property type="term" value="C:juxtaparanode region of axon"/>
    <property type="evidence" value="ECO:0000250"/>
    <property type="project" value="BHF-UCL"/>
</dbReference>
<dbReference type="GO" id="GO:0043209">
    <property type="term" value="C:myelin sheath"/>
    <property type="evidence" value="ECO:0000250"/>
    <property type="project" value="BHF-UCL"/>
</dbReference>
<dbReference type="GO" id="GO:0043025">
    <property type="term" value="C:neuronal cell body"/>
    <property type="evidence" value="ECO:0007669"/>
    <property type="project" value="Ensembl"/>
</dbReference>
<dbReference type="GO" id="GO:0033268">
    <property type="term" value="C:node of Ranvier"/>
    <property type="evidence" value="ECO:0000250"/>
    <property type="project" value="BHF-UCL"/>
</dbReference>
<dbReference type="GO" id="GO:0005886">
    <property type="term" value="C:plasma membrane"/>
    <property type="evidence" value="ECO:0000250"/>
    <property type="project" value="BHF-UCL"/>
</dbReference>
<dbReference type="GO" id="GO:0045211">
    <property type="term" value="C:postsynaptic membrane"/>
    <property type="evidence" value="ECO:0000314"/>
    <property type="project" value="SynGO"/>
</dbReference>
<dbReference type="GO" id="GO:0098552">
    <property type="term" value="C:side of membrane"/>
    <property type="evidence" value="ECO:0007669"/>
    <property type="project" value="UniProtKB-KW"/>
</dbReference>
<dbReference type="GO" id="GO:0045202">
    <property type="term" value="C:synapse"/>
    <property type="evidence" value="ECO:0000250"/>
    <property type="project" value="BHF-UCL"/>
</dbReference>
<dbReference type="GO" id="GO:0030246">
    <property type="term" value="F:carbohydrate binding"/>
    <property type="evidence" value="ECO:0007669"/>
    <property type="project" value="Ensembl"/>
</dbReference>
<dbReference type="GO" id="GO:0098632">
    <property type="term" value="F:cell-cell adhesion mediator activity"/>
    <property type="evidence" value="ECO:0000318"/>
    <property type="project" value="GO_Central"/>
</dbReference>
<dbReference type="GO" id="GO:0007628">
    <property type="term" value="P:adult walking behavior"/>
    <property type="evidence" value="ECO:0007669"/>
    <property type="project" value="Ensembl"/>
</dbReference>
<dbReference type="GO" id="GO:0007411">
    <property type="term" value="P:axon guidance"/>
    <property type="evidence" value="ECO:0000318"/>
    <property type="project" value="GO_Central"/>
</dbReference>
<dbReference type="GO" id="GO:0007413">
    <property type="term" value="P:axonal fasciculation"/>
    <property type="evidence" value="ECO:0007669"/>
    <property type="project" value="Ensembl"/>
</dbReference>
<dbReference type="GO" id="GO:0007155">
    <property type="term" value="P:cell adhesion"/>
    <property type="evidence" value="ECO:0000303"/>
    <property type="project" value="ProtInc"/>
</dbReference>
<dbReference type="GO" id="GO:0022010">
    <property type="term" value="P:central nervous system myelination"/>
    <property type="evidence" value="ECO:0007669"/>
    <property type="project" value="Ensembl"/>
</dbReference>
<dbReference type="GO" id="GO:0021853">
    <property type="term" value="P:cerebral cortex GABAergic interneuron migration"/>
    <property type="evidence" value="ECO:0007669"/>
    <property type="project" value="Ensembl"/>
</dbReference>
<dbReference type="GO" id="GO:0045163">
    <property type="term" value="P:clustering of voltage-gated potassium channels"/>
    <property type="evidence" value="ECO:0000250"/>
    <property type="project" value="BHF-UCL"/>
</dbReference>
<dbReference type="GO" id="GO:0070593">
    <property type="term" value="P:dendrite self-avoidance"/>
    <property type="evidence" value="ECO:0000318"/>
    <property type="project" value="GO_Central"/>
</dbReference>
<dbReference type="GO" id="GO:0051649">
    <property type="term" value="P:establishment of localization in cell"/>
    <property type="evidence" value="ECO:0007669"/>
    <property type="project" value="Ensembl"/>
</dbReference>
<dbReference type="GO" id="GO:0071206">
    <property type="term" value="P:establishment of protein localization to juxtaparanode region of axon"/>
    <property type="evidence" value="ECO:0007669"/>
    <property type="project" value="Ensembl"/>
</dbReference>
<dbReference type="GO" id="GO:0045444">
    <property type="term" value="P:fat cell differentiation"/>
    <property type="evidence" value="ECO:0007669"/>
    <property type="project" value="Ensembl"/>
</dbReference>
<dbReference type="GO" id="GO:0001973">
    <property type="term" value="P:G protein-coupled adenosine receptor signaling pathway"/>
    <property type="evidence" value="ECO:0007669"/>
    <property type="project" value="Ensembl"/>
</dbReference>
<dbReference type="GO" id="GO:0007156">
    <property type="term" value="P:homophilic cell adhesion via plasma membrane adhesion molecules"/>
    <property type="evidence" value="ECO:0000318"/>
    <property type="project" value="GO_Central"/>
</dbReference>
<dbReference type="GO" id="GO:0007612">
    <property type="term" value="P:learning"/>
    <property type="evidence" value="ECO:0007669"/>
    <property type="project" value="Ensembl"/>
</dbReference>
<dbReference type="GO" id="GO:0000226">
    <property type="term" value="P:microtubule cytoskeleton organization"/>
    <property type="evidence" value="ECO:0007669"/>
    <property type="project" value="Ensembl"/>
</dbReference>
<dbReference type="GO" id="GO:0045665">
    <property type="term" value="P:negative regulation of neuron differentiation"/>
    <property type="evidence" value="ECO:0007669"/>
    <property type="project" value="Ensembl"/>
</dbReference>
<dbReference type="GO" id="GO:0060168">
    <property type="term" value="P:positive regulation of adenosine receptor signaling pathway"/>
    <property type="evidence" value="ECO:0007669"/>
    <property type="project" value="Ensembl"/>
</dbReference>
<dbReference type="GO" id="GO:0010954">
    <property type="term" value="P:positive regulation of protein processing"/>
    <property type="evidence" value="ECO:0007669"/>
    <property type="project" value="Ensembl"/>
</dbReference>
<dbReference type="GO" id="GO:0097090">
    <property type="term" value="P:presynaptic membrane organization"/>
    <property type="evidence" value="ECO:0000315"/>
    <property type="project" value="UniProtKB"/>
</dbReference>
<dbReference type="GO" id="GO:0071205">
    <property type="term" value="P:protein localization to juxtaparanode region of axon"/>
    <property type="evidence" value="ECO:0000250"/>
    <property type="project" value="BHF-UCL"/>
</dbReference>
<dbReference type="GO" id="GO:0016485">
    <property type="term" value="P:protein processing"/>
    <property type="evidence" value="ECO:0007669"/>
    <property type="project" value="Ensembl"/>
</dbReference>
<dbReference type="GO" id="GO:0031623">
    <property type="term" value="P:receptor internalization"/>
    <property type="evidence" value="ECO:0007669"/>
    <property type="project" value="Ensembl"/>
</dbReference>
<dbReference type="GO" id="GO:0002023">
    <property type="term" value="P:reduction of food intake in response to dietary excess"/>
    <property type="evidence" value="ECO:0007669"/>
    <property type="project" value="Ensembl"/>
</dbReference>
<dbReference type="GO" id="GO:0048710">
    <property type="term" value="P:regulation of astrocyte differentiation"/>
    <property type="evidence" value="ECO:0007669"/>
    <property type="project" value="Ensembl"/>
</dbReference>
<dbReference type="GO" id="GO:0031133">
    <property type="term" value="P:regulation of axon diameter"/>
    <property type="evidence" value="ECO:0007669"/>
    <property type="project" value="Ensembl"/>
</dbReference>
<dbReference type="GO" id="GO:0022604">
    <property type="term" value="P:regulation of cell morphogenesis"/>
    <property type="evidence" value="ECO:0007669"/>
    <property type="project" value="Ensembl"/>
</dbReference>
<dbReference type="GO" id="GO:0048168">
    <property type="term" value="P:regulation of neuronal synaptic plasticity"/>
    <property type="evidence" value="ECO:0007669"/>
    <property type="project" value="Ensembl"/>
</dbReference>
<dbReference type="GO" id="GO:0050808">
    <property type="term" value="P:synapse organization"/>
    <property type="evidence" value="ECO:0000318"/>
    <property type="project" value="GO_Central"/>
</dbReference>
<dbReference type="CDD" id="cd00063">
    <property type="entry name" value="FN3"/>
    <property type="match status" value="3"/>
</dbReference>
<dbReference type="CDD" id="cd05727">
    <property type="entry name" value="Ig2_Contactin-2-like"/>
    <property type="match status" value="1"/>
</dbReference>
<dbReference type="CDD" id="cd05728">
    <property type="entry name" value="Ig4_Contactin-2-like"/>
    <property type="match status" value="1"/>
</dbReference>
<dbReference type="CDD" id="cd04969">
    <property type="entry name" value="Ig5_Contactin"/>
    <property type="match status" value="1"/>
</dbReference>
<dbReference type="CDD" id="cd05854">
    <property type="entry name" value="Ig6_Contactin-2"/>
    <property type="match status" value="1"/>
</dbReference>
<dbReference type="CDD" id="cd05850">
    <property type="entry name" value="IgI_1_Contactin-2"/>
    <property type="match status" value="1"/>
</dbReference>
<dbReference type="CDD" id="cd04968">
    <property type="entry name" value="IgI_3_Contactin"/>
    <property type="match status" value="1"/>
</dbReference>
<dbReference type="FunFam" id="2.60.40.10:FF:000035">
    <property type="entry name" value="Contactin 1"/>
    <property type="match status" value="1"/>
</dbReference>
<dbReference type="FunFam" id="2.60.40.10:FF:000044">
    <property type="entry name" value="Contactin 1"/>
    <property type="match status" value="1"/>
</dbReference>
<dbReference type="FunFam" id="2.60.40.10:FF:000047">
    <property type="entry name" value="Contactin 1"/>
    <property type="match status" value="1"/>
</dbReference>
<dbReference type="FunFam" id="2.60.40.10:FF:000052">
    <property type="entry name" value="Contactin 1"/>
    <property type="match status" value="1"/>
</dbReference>
<dbReference type="FunFam" id="2.60.40.10:FF:000054">
    <property type="entry name" value="Contactin 1"/>
    <property type="match status" value="1"/>
</dbReference>
<dbReference type="FunFam" id="2.60.40.10:FF:000064">
    <property type="entry name" value="Contactin 1"/>
    <property type="match status" value="1"/>
</dbReference>
<dbReference type="FunFam" id="2.60.40.10:FF:000600">
    <property type="entry name" value="Contactin 2"/>
    <property type="match status" value="1"/>
</dbReference>
<dbReference type="FunFam" id="2.60.40.10:FF:000004">
    <property type="entry name" value="DCC isoform 1"/>
    <property type="match status" value="1"/>
</dbReference>
<dbReference type="FunFam" id="2.60.40.10:FF:000005">
    <property type="entry name" value="Neuronal cell adhesion molecule"/>
    <property type="match status" value="1"/>
</dbReference>
<dbReference type="FunFam" id="2.60.40.10:FF:000028">
    <property type="entry name" value="Neuronal cell adhesion molecule"/>
    <property type="match status" value="1"/>
</dbReference>
<dbReference type="Gene3D" id="2.60.40.10">
    <property type="entry name" value="Immunoglobulins"/>
    <property type="match status" value="10"/>
</dbReference>
<dbReference type="InterPro" id="IPR047102">
    <property type="entry name" value="Contactin-1_2_Ig1"/>
</dbReference>
<dbReference type="InterPro" id="IPR003961">
    <property type="entry name" value="FN3_dom"/>
</dbReference>
<dbReference type="InterPro" id="IPR036116">
    <property type="entry name" value="FN3_sf"/>
</dbReference>
<dbReference type="InterPro" id="IPR007110">
    <property type="entry name" value="Ig-like_dom"/>
</dbReference>
<dbReference type="InterPro" id="IPR036179">
    <property type="entry name" value="Ig-like_dom_sf"/>
</dbReference>
<dbReference type="InterPro" id="IPR013783">
    <property type="entry name" value="Ig-like_fold"/>
</dbReference>
<dbReference type="InterPro" id="IPR013098">
    <property type="entry name" value="Ig_I-set"/>
</dbReference>
<dbReference type="InterPro" id="IPR003599">
    <property type="entry name" value="Ig_sub"/>
</dbReference>
<dbReference type="InterPro" id="IPR003598">
    <property type="entry name" value="Ig_sub2"/>
</dbReference>
<dbReference type="PANTHER" id="PTHR44170:SF28">
    <property type="entry name" value="CONTACTIN-2"/>
    <property type="match status" value="1"/>
</dbReference>
<dbReference type="PANTHER" id="PTHR44170">
    <property type="entry name" value="PROTEIN SIDEKICK"/>
    <property type="match status" value="1"/>
</dbReference>
<dbReference type="Pfam" id="PF00041">
    <property type="entry name" value="fn3"/>
    <property type="match status" value="2"/>
</dbReference>
<dbReference type="Pfam" id="PF07679">
    <property type="entry name" value="I-set"/>
    <property type="match status" value="2"/>
</dbReference>
<dbReference type="Pfam" id="PF13927">
    <property type="entry name" value="Ig_3"/>
    <property type="match status" value="3"/>
</dbReference>
<dbReference type="SMART" id="SM00060">
    <property type="entry name" value="FN3"/>
    <property type="match status" value="4"/>
</dbReference>
<dbReference type="SMART" id="SM00409">
    <property type="entry name" value="IG"/>
    <property type="match status" value="6"/>
</dbReference>
<dbReference type="SMART" id="SM00408">
    <property type="entry name" value="IGc2"/>
    <property type="match status" value="5"/>
</dbReference>
<dbReference type="SUPFAM" id="SSF49265">
    <property type="entry name" value="Fibronectin type III"/>
    <property type="match status" value="3"/>
</dbReference>
<dbReference type="SUPFAM" id="SSF48726">
    <property type="entry name" value="Immunoglobulin"/>
    <property type="match status" value="6"/>
</dbReference>
<dbReference type="PROSITE" id="PS50853">
    <property type="entry name" value="FN3"/>
    <property type="match status" value="4"/>
</dbReference>
<dbReference type="PROSITE" id="PS50835">
    <property type="entry name" value="IG_LIKE"/>
    <property type="match status" value="6"/>
</dbReference>
<reference key="1">
    <citation type="journal article" date="1993" name="Eur. J. Biochem.">
        <title>cDNA cloning, structural features, and eucaryotic expression of human TAG-1/axonin-1.</title>
        <authorList>
            <person name="Hasler T.H."/>
            <person name="Rader C."/>
            <person name="Stoeckli E.T."/>
            <person name="Zuellig R.A."/>
            <person name="Sonderegger P."/>
        </authorList>
    </citation>
    <scope>NUCLEOTIDE SEQUENCE [MRNA]</scope>
    <source>
        <tissue>Brain</tissue>
    </source>
</reference>
<reference key="2">
    <citation type="journal article" date="1993" name="Genomics">
        <title>Isolation of the cDNA and chromosomal localization of the gene (TAX1) encoding the human axonal glycoprotein TAG-1.</title>
        <authorList>
            <person name="Tsiotra C.P."/>
            <person name="Karagogeos D."/>
            <person name="Theodorakis K."/>
            <person name="Michaelidis M.T."/>
            <person name="Modi W.S."/>
            <person name="Furley J.A."/>
            <person name="Jessel M.T."/>
            <person name="Papamatheakis J."/>
        </authorList>
    </citation>
    <scope>NUCLEOTIDE SEQUENCE [MRNA]</scope>
    <source>
        <tissue>Brain</tissue>
    </source>
</reference>
<reference key="3">
    <citation type="journal article" date="1995" name="Genomics">
        <title>The human TAX1 gene encoding the axon-associated cell adhesion molecule TAG-1/axonin-1: genomic structure and basic promoter.</title>
        <authorList>
            <person name="Kozlov S.V."/>
            <person name="Giger R.J."/>
            <person name="Hasler T."/>
            <person name="Korvatska E."/>
            <person name="Schorderet D.F."/>
            <person name="Sonderegger P."/>
        </authorList>
    </citation>
    <scope>NUCLEOTIDE SEQUENCE [GENOMIC DNA]</scope>
    <source>
        <tissue>Placenta</tissue>
    </source>
</reference>
<reference key="4">
    <citation type="journal article" date="2006" name="Nature">
        <title>The DNA sequence and biological annotation of human chromosome 1.</title>
        <authorList>
            <person name="Gregory S.G."/>
            <person name="Barlow K.F."/>
            <person name="McLay K.E."/>
            <person name="Kaul R."/>
            <person name="Swarbreck D."/>
            <person name="Dunham A."/>
            <person name="Scott C.E."/>
            <person name="Howe K.L."/>
            <person name="Woodfine K."/>
            <person name="Spencer C.C.A."/>
            <person name="Jones M.C."/>
            <person name="Gillson C."/>
            <person name="Searle S."/>
            <person name="Zhou Y."/>
            <person name="Kokocinski F."/>
            <person name="McDonald L."/>
            <person name="Evans R."/>
            <person name="Phillips K."/>
            <person name="Atkinson A."/>
            <person name="Cooper R."/>
            <person name="Jones C."/>
            <person name="Hall R.E."/>
            <person name="Andrews T.D."/>
            <person name="Lloyd C."/>
            <person name="Ainscough R."/>
            <person name="Almeida J.P."/>
            <person name="Ambrose K.D."/>
            <person name="Anderson F."/>
            <person name="Andrew R.W."/>
            <person name="Ashwell R.I.S."/>
            <person name="Aubin K."/>
            <person name="Babbage A.K."/>
            <person name="Bagguley C.L."/>
            <person name="Bailey J."/>
            <person name="Beasley H."/>
            <person name="Bethel G."/>
            <person name="Bird C.P."/>
            <person name="Bray-Allen S."/>
            <person name="Brown J.Y."/>
            <person name="Brown A.J."/>
            <person name="Buckley D."/>
            <person name="Burton J."/>
            <person name="Bye J."/>
            <person name="Carder C."/>
            <person name="Chapman J.C."/>
            <person name="Clark S.Y."/>
            <person name="Clarke G."/>
            <person name="Clee C."/>
            <person name="Cobley V."/>
            <person name="Collier R.E."/>
            <person name="Corby N."/>
            <person name="Coville G.J."/>
            <person name="Davies J."/>
            <person name="Deadman R."/>
            <person name="Dunn M."/>
            <person name="Earthrowl M."/>
            <person name="Ellington A.G."/>
            <person name="Errington H."/>
            <person name="Frankish A."/>
            <person name="Frankland J."/>
            <person name="French L."/>
            <person name="Garner P."/>
            <person name="Garnett J."/>
            <person name="Gay L."/>
            <person name="Ghori M.R.J."/>
            <person name="Gibson R."/>
            <person name="Gilby L.M."/>
            <person name="Gillett W."/>
            <person name="Glithero R.J."/>
            <person name="Grafham D.V."/>
            <person name="Griffiths C."/>
            <person name="Griffiths-Jones S."/>
            <person name="Grocock R."/>
            <person name="Hammond S."/>
            <person name="Harrison E.S.I."/>
            <person name="Hart E."/>
            <person name="Haugen E."/>
            <person name="Heath P.D."/>
            <person name="Holmes S."/>
            <person name="Holt K."/>
            <person name="Howden P.J."/>
            <person name="Hunt A.R."/>
            <person name="Hunt S.E."/>
            <person name="Hunter G."/>
            <person name="Isherwood J."/>
            <person name="James R."/>
            <person name="Johnson C."/>
            <person name="Johnson D."/>
            <person name="Joy A."/>
            <person name="Kay M."/>
            <person name="Kershaw J.K."/>
            <person name="Kibukawa M."/>
            <person name="Kimberley A.M."/>
            <person name="King A."/>
            <person name="Knights A.J."/>
            <person name="Lad H."/>
            <person name="Laird G."/>
            <person name="Lawlor S."/>
            <person name="Leongamornlert D.A."/>
            <person name="Lloyd D.M."/>
            <person name="Loveland J."/>
            <person name="Lovell J."/>
            <person name="Lush M.J."/>
            <person name="Lyne R."/>
            <person name="Martin S."/>
            <person name="Mashreghi-Mohammadi M."/>
            <person name="Matthews L."/>
            <person name="Matthews N.S.W."/>
            <person name="McLaren S."/>
            <person name="Milne S."/>
            <person name="Mistry S."/>
            <person name="Moore M.J.F."/>
            <person name="Nickerson T."/>
            <person name="O'Dell C.N."/>
            <person name="Oliver K."/>
            <person name="Palmeiri A."/>
            <person name="Palmer S.A."/>
            <person name="Parker A."/>
            <person name="Patel D."/>
            <person name="Pearce A.V."/>
            <person name="Peck A.I."/>
            <person name="Pelan S."/>
            <person name="Phelps K."/>
            <person name="Phillimore B.J."/>
            <person name="Plumb R."/>
            <person name="Rajan J."/>
            <person name="Raymond C."/>
            <person name="Rouse G."/>
            <person name="Saenphimmachak C."/>
            <person name="Sehra H.K."/>
            <person name="Sheridan E."/>
            <person name="Shownkeen R."/>
            <person name="Sims S."/>
            <person name="Skuce C.D."/>
            <person name="Smith M."/>
            <person name="Steward C."/>
            <person name="Subramanian S."/>
            <person name="Sycamore N."/>
            <person name="Tracey A."/>
            <person name="Tromans A."/>
            <person name="Van Helmond Z."/>
            <person name="Wall M."/>
            <person name="Wallis J.M."/>
            <person name="White S."/>
            <person name="Whitehead S.L."/>
            <person name="Wilkinson J.E."/>
            <person name="Willey D.L."/>
            <person name="Williams H."/>
            <person name="Wilming L."/>
            <person name="Wray P.W."/>
            <person name="Wu Z."/>
            <person name="Coulson A."/>
            <person name="Vaudin M."/>
            <person name="Sulston J.E."/>
            <person name="Durbin R.M."/>
            <person name="Hubbard T."/>
            <person name="Wooster R."/>
            <person name="Dunham I."/>
            <person name="Carter N.P."/>
            <person name="McVean G."/>
            <person name="Ross M.T."/>
            <person name="Harrow J."/>
            <person name="Olson M.V."/>
            <person name="Beck S."/>
            <person name="Rogers J."/>
            <person name="Bentley D.R."/>
        </authorList>
    </citation>
    <scope>NUCLEOTIDE SEQUENCE [LARGE SCALE GENOMIC DNA]</scope>
</reference>
<reference key="5">
    <citation type="submission" date="1995-11" db="EMBL/GenBank/DDBJ databases">
        <title>Molecular structure and functional studies of the TAX-1 promoter.</title>
        <authorList>
            <person name="Tsiotra C.P."/>
            <person name="Theodorakis C."/>
            <person name="Michaelidis M.T."/>
            <person name="Mamalaki C."/>
            <person name="Karagogeus D."/>
            <person name="Papamatheakis J."/>
        </authorList>
    </citation>
    <scope>NUCLEOTIDE SEQUENCE [GENOMIC DNA] OF 1-136</scope>
    <source>
        <tissue>Placenta</tissue>
    </source>
</reference>
<reference key="6">
    <citation type="journal article" date="2004" name="Protein Sci.">
        <title>Signal peptide prediction based on analysis of experimentally verified cleavage sites.</title>
        <authorList>
            <person name="Zhang Z."/>
            <person name="Henzel W.J."/>
        </authorList>
    </citation>
    <scope>PROTEIN SEQUENCE OF 31-45</scope>
</reference>
<reference key="7">
    <citation type="journal article" date="2005" name="J. Proteome Res.">
        <title>Human plasma N-glycoproteome analysis by immunoaffinity subtraction, hydrazide chemistry, and mass spectrometry.</title>
        <authorList>
            <person name="Liu T."/>
            <person name="Qian W.-J."/>
            <person name="Gritsenko M.A."/>
            <person name="Camp D.G. II"/>
            <person name="Monroe M.E."/>
            <person name="Moore R.J."/>
            <person name="Smith R.D."/>
        </authorList>
    </citation>
    <scope>GLYCOSYLATION [LARGE SCALE ANALYSIS] AT ASN-904</scope>
    <source>
        <tissue>Plasma</tissue>
    </source>
</reference>
<reference key="8">
    <citation type="journal article" date="2013" name="Brain">
        <title>Autosomal recessive cortical myoclonic tremor and epilepsy: association with a mutation in the potassium channel associated gene CNTN2.</title>
        <authorList>
            <person name="Stogmann E."/>
            <person name="Reinthaler E."/>
            <person name="Eltawil S."/>
            <person name="El Etribi M.A."/>
            <person name="Hemeda M."/>
            <person name="El Nahhas N."/>
            <person name="Gaber A.M."/>
            <person name="Fouad A."/>
            <person name="Edris S."/>
            <person name="Benet-Pages A."/>
            <person name="Eck S.H."/>
            <person name="Pataraia E."/>
            <person name="Mei D."/>
            <person name="Brice A."/>
            <person name="Lesage S."/>
            <person name="Guerrini R."/>
            <person name="Zimprich F."/>
            <person name="Strom T.M."/>
            <person name="Zimprich A."/>
        </authorList>
    </citation>
    <scope>INVOLVEMENT IN EPEO5</scope>
    <scope>FUNCTION</scope>
</reference>
<reference key="9">
    <citation type="journal article" date="2007" name="Protein Sci.">
        <title>The crystal structure of the ligand-binding module of human TAG-1 suggests a new mode of homophilic interaction.</title>
        <authorList>
            <person name="Mortl M."/>
            <person name="Sonderegger P."/>
            <person name="Diederichs K."/>
            <person name="Welte W."/>
        </authorList>
    </citation>
    <scope>X-RAY CRYSTALLOGRAPHY (3.07 ANGSTROMS) OF 34-414</scope>
    <scope>DISULFIDE BONDS</scope>
</reference>
<sequence>MGTATRRKPHLLLVAAVALVSSSAWSSALGSQTTFGPVFEDQPLSVLFPEESTEEQVLLACRARASPPATYRWKMNGTEMKLEPGSRHQLVGGNLVIMNPTKAQDAGVYQCLASNPVGTVVSREAILRFGFLQEFSKEERDPVKAHEGWGVMLPCNPPAHYPGLSYRWLLNEFPNFIPTDGRHFVSQTTGNLYIARTNASDLGNYSCLATSHMDFSTKSVFSKFAQLNLAAEDTRLFAPSIKARFPAETYALVGQQVTLECFAFGNPVPRIKWRKVDGSLSPQWTTAEPTLQIPSVSFEDEGTYECEAENSKGRDTVQGRIIVQAQPEWLKVISDTEADIGSNLRWGCAAAGKPRPTVRWLRNGEPLASQNRVEVLAGDLRFSKLSLEDSGMYQCVAENKHGTIYASAELAVQALAPDFRLNPVRRLIPAARGGEILIPCQPRAAPKAVVLWSKGTEILVNSSRVTVTPDGTLIIRNISRSDEGKYTCFAENFMGKANSTGILSVRDATKITLAPSSADINLGDNLTLQCHASHDPTMDLTFTWTLDDFPIDFDKPGGHYRRTNVKETIGDLTILNAQLRHGGKYTCMAQTVVDSASKEATVLVRGPPGPPGGVVVRDIGDTTIQLSWSRGFDNHSPIAKYTLQARTPPAGKWKQVRTNPANIEGNAETAQVLGLTPWMDYEFRVIASNILGTGEPSGPSSKIRTREAAPSVAPSGLSGGGGAPGELIVNWTPMSREYQNGDGFGYLLSFRRQGSTHWQTARVPGADAQYFVYSNESVRPYTPFEVKIRSYNRRGDGPESLTALVYSAEEEPRVAPTKVWAKGVSSSEMNVTWEPVQQDMNGILLGYEIRYWKAGDKEAAADRVRTAGLDTSARVSGLHPNTKYHVTVRAYNRAGTGPASPSANATTMKPPPRRPPGNISWTFSSSSLSIKWDPVVPFRNESAVTGYKMLYQNDLHLTPTLHLTGKNWIEIPVPEDIGHALVQIRTTGPGGDGIPAEVHIVRNGGTSMMVENMAVRPAPHPGTVISHSVAMLILIGSLEL</sequence>
<organism>
    <name type="scientific">Homo sapiens</name>
    <name type="common">Human</name>
    <dbReference type="NCBI Taxonomy" id="9606"/>
    <lineage>
        <taxon>Eukaryota</taxon>
        <taxon>Metazoa</taxon>
        <taxon>Chordata</taxon>
        <taxon>Craniata</taxon>
        <taxon>Vertebrata</taxon>
        <taxon>Euteleostomi</taxon>
        <taxon>Mammalia</taxon>
        <taxon>Eutheria</taxon>
        <taxon>Euarchontoglires</taxon>
        <taxon>Primates</taxon>
        <taxon>Haplorrhini</taxon>
        <taxon>Catarrhini</taxon>
        <taxon>Hominidae</taxon>
        <taxon>Homo</taxon>
    </lineage>
</organism>
<name>CNTN2_HUMAN</name>
<proteinExistence type="evidence at protein level"/>